<comment type="function">
    <text evidence="1">Associates with aggregated proteins, together with IbpB, to stabilize and protect them from irreversible denaturation and extensive proteolysis during heat shock and oxidative stress. Aggregated proteins bound to the IbpAB complex are more efficiently refolded and reactivated by the ATP-dependent chaperone systems ClpB and DnaK/DnaJ/GrpE. Its activity is ATP-independent.</text>
</comment>
<comment type="subunit">
    <text evidence="1">Monomer. Forms homomultimers of about 100-150 subunits at optimal growth temperatures. Conformation changes to monomers at high temperatures or high ionic concentrations.</text>
</comment>
<comment type="subcellular location">
    <subcellularLocation>
        <location evidence="1">Cytoplasm</location>
    </subcellularLocation>
</comment>
<comment type="similarity">
    <text evidence="1 2">Belongs to the small heat shock protein (HSP20) family.</text>
</comment>
<sequence length="137" mass="15774">MRNFDLSPLYRSAIGFDRLFNHLENNQSQSNGGYPPYNVELVDENHYRIAIAVAGFAESELEITAQDNLLVVKGAHADEQKERTYLYQGIAERNFERKFQLAENIHVRGANLVNGLLYIDLERVIPEAKKPRRIEIN</sequence>
<feature type="chain" id="PRO_1000022021" description="Small heat shock protein IbpA">
    <location>
        <begin position="1"/>
        <end position="137"/>
    </location>
</feature>
<feature type="domain" description="sHSP" evidence="2">
    <location>
        <begin position="28"/>
        <end position="137"/>
    </location>
</feature>
<proteinExistence type="inferred from homology"/>
<organism>
    <name type="scientific">Escherichia coli O1:K1 / APEC</name>
    <dbReference type="NCBI Taxonomy" id="405955"/>
    <lineage>
        <taxon>Bacteria</taxon>
        <taxon>Pseudomonadati</taxon>
        <taxon>Pseudomonadota</taxon>
        <taxon>Gammaproteobacteria</taxon>
        <taxon>Enterobacterales</taxon>
        <taxon>Enterobacteriaceae</taxon>
        <taxon>Escherichia</taxon>
    </lineage>
</organism>
<gene>
    <name evidence="1" type="primary">ibpA</name>
    <name type="ordered locus">Ecok1_36680</name>
    <name type="ORF">APECO1_2770</name>
</gene>
<reference key="1">
    <citation type="journal article" date="2007" name="J. Bacteriol.">
        <title>The genome sequence of avian pathogenic Escherichia coli strain O1:K1:H7 shares strong similarities with human extraintestinal pathogenic E. coli genomes.</title>
        <authorList>
            <person name="Johnson T.J."/>
            <person name="Kariyawasam S."/>
            <person name="Wannemuehler Y."/>
            <person name="Mangiamele P."/>
            <person name="Johnson S.J."/>
            <person name="Doetkott C."/>
            <person name="Skyberg J.A."/>
            <person name="Lynne A.M."/>
            <person name="Johnson J.R."/>
            <person name="Nolan L.K."/>
        </authorList>
    </citation>
    <scope>NUCLEOTIDE SEQUENCE [LARGE SCALE GENOMIC DNA]</scope>
</reference>
<accession>A1AHM2</accession>
<evidence type="ECO:0000255" key="1">
    <source>
        <dbReference type="HAMAP-Rule" id="MF_02000"/>
    </source>
</evidence>
<evidence type="ECO:0000255" key="2">
    <source>
        <dbReference type="PROSITE-ProRule" id="PRU00285"/>
    </source>
</evidence>
<name>IBPA_ECOK1</name>
<protein>
    <recommendedName>
        <fullName evidence="1">Small heat shock protein IbpA</fullName>
    </recommendedName>
    <alternativeName>
        <fullName evidence="1">16 kDa heat shock protein A</fullName>
    </alternativeName>
</protein>
<dbReference type="EMBL" id="CP000468">
    <property type="protein sequence ID" value="ABJ03162.1"/>
    <property type="molecule type" value="Genomic_DNA"/>
</dbReference>
<dbReference type="RefSeq" id="WP_001243437.1">
    <property type="nucleotide sequence ID" value="NZ_CADILS010000011.1"/>
</dbReference>
<dbReference type="SMR" id="A1AHM2"/>
<dbReference type="GeneID" id="93778428"/>
<dbReference type="KEGG" id="ecv:APECO1_2770"/>
<dbReference type="HOGENOM" id="CLU_046737_4_2_6"/>
<dbReference type="Proteomes" id="UP000008216">
    <property type="component" value="Chromosome"/>
</dbReference>
<dbReference type="GO" id="GO:0005737">
    <property type="term" value="C:cytoplasm"/>
    <property type="evidence" value="ECO:0007669"/>
    <property type="project" value="UniProtKB-SubCell"/>
</dbReference>
<dbReference type="GO" id="GO:0050821">
    <property type="term" value="P:protein stabilization"/>
    <property type="evidence" value="ECO:0007669"/>
    <property type="project" value="UniProtKB-UniRule"/>
</dbReference>
<dbReference type="CDD" id="cd06470">
    <property type="entry name" value="ACD_IbpA-B_like"/>
    <property type="match status" value="1"/>
</dbReference>
<dbReference type="FunFam" id="2.60.40.790:FF:000002">
    <property type="entry name" value="Small heat shock protein IbpA"/>
    <property type="match status" value="1"/>
</dbReference>
<dbReference type="Gene3D" id="2.60.40.790">
    <property type="match status" value="1"/>
</dbReference>
<dbReference type="HAMAP" id="MF_02000">
    <property type="entry name" value="HSP20_IbpA"/>
    <property type="match status" value="1"/>
</dbReference>
<dbReference type="InterPro" id="IPR002068">
    <property type="entry name" value="A-crystallin/Hsp20_dom"/>
</dbReference>
<dbReference type="InterPro" id="IPR037913">
    <property type="entry name" value="ACD_IbpA/B"/>
</dbReference>
<dbReference type="InterPro" id="IPR008978">
    <property type="entry name" value="HSP20-like_chaperone"/>
</dbReference>
<dbReference type="InterPro" id="IPR023728">
    <property type="entry name" value="HSP20_IbpA"/>
</dbReference>
<dbReference type="NCBIfam" id="NF008013">
    <property type="entry name" value="PRK10743.1"/>
    <property type="match status" value="1"/>
</dbReference>
<dbReference type="PANTHER" id="PTHR47062">
    <property type="match status" value="1"/>
</dbReference>
<dbReference type="PANTHER" id="PTHR47062:SF1">
    <property type="entry name" value="SMALL HEAT SHOCK PROTEIN IBPA"/>
    <property type="match status" value="1"/>
</dbReference>
<dbReference type="Pfam" id="PF00011">
    <property type="entry name" value="HSP20"/>
    <property type="match status" value="1"/>
</dbReference>
<dbReference type="SUPFAM" id="SSF49764">
    <property type="entry name" value="HSP20-like chaperones"/>
    <property type="match status" value="1"/>
</dbReference>
<dbReference type="PROSITE" id="PS01031">
    <property type="entry name" value="SHSP"/>
    <property type="match status" value="1"/>
</dbReference>
<keyword id="KW-0143">Chaperone</keyword>
<keyword id="KW-0963">Cytoplasm</keyword>
<keyword id="KW-1185">Reference proteome</keyword>
<keyword id="KW-0346">Stress response</keyword>